<sequence>MAGKSPEEQHPVKAYGWAATDSSGILSPFKFSRRATGDHDVRVKILYAGVCHSDLQSARNDMGCFTYPLVPGFETVGTATEVGSKVTKVKVGDKVAVGIMVGSCGKCDECVNDRECYCPEVITSYGRIDHDGTPTYGGFSSETVANEKFVFCFPEKLPMAAGAPLLNAGVSVYSAMRFYGLDKPGMHLGVVGLGGLGHLAVKFAKAFGVKVTVISTSTSKKGEAINDLGADAFLVSTDAEQMQAGSGTLDGILDTVPVVHPIEALLGLLKNHTKLVLVGATMGSFELPILPLGVGRKSVVSTIGGSTKETQEMLDFAAEHDITASVEIIPMDYVNTAMERIEKGDVRYRFVIDIGNTLTPPES</sequence>
<reference evidence="9" key="1">
    <citation type="journal article" date="2016" name="Planta">
        <title>A novel cinnamyl alcohol dehydrogenase (CAD)-like reductase contributes to the structural diversity of monoterpenoid indole alkaloids in Rauvolfia.</title>
        <authorList>
            <person name="Geissler M."/>
            <person name="Burghard M."/>
            <person name="Volk J."/>
            <person name="Staniek A."/>
            <person name="Warzecha H."/>
        </authorList>
    </citation>
    <scope>NUCLEOTIDE SEQUENCE [MRNA] (ISOFORM 1)</scope>
    <scope>PROTEIN SEQUENCE OF 5-13 AND 298-308</scope>
    <scope>FUNCTION</scope>
    <scope>CATALYTIC ACTIVITY</scope>
    <scope>PATHWAY</scope>
    <scope>TISSUE SPECIFICITY</scope>
    <scope>BIOPHYSICOCHEMICAL PROPERTIES</scope>
</reference>
<reference evidence="10" key="2">
    <citation type="journal article" date="2024" name="Nat. Commun.">
        <title>De novo biosynthesis of antiarrhythmic alkaloid ajmaline.</title>
        <authorList>
            <person name="Guo J."/>
            <person name="Gao D."/>
            <person name="Lian J."/>
            <person name="Qu Y."/>
        </authorList>
    </citation>
    <scope>NUCLEOTIDE SEQUENCE [MRNA] (ISOFORM 2)</scope>
    <scope>FUNCTION</scope>
    <scope>CATALYTIC ACTIVITY</scope>
    <scope>BIOPHYSICOCHEMICAL PROPERTIES</scope>
    <scope>PATHWAY</scope>
    <scope>TISSUE SPECIFICITY</scope>
    <scope>BIOTECHNOLOGY</scope>
</reference>
<reference key="3">
    <citation type="journal article" date="2002" name="Planta Med.">
        <title>A newly-detected reductase from Rauvolfia closes a gap in the biosynthesis of the antiarrhythmic alkaloid ajmaline.</title>
        <authorList>
            <person name="Gao S."/>
            <person name="von Schumann G."/>
            <person name="Stoeckigt J."/>
        </authorList>
    </citation>
    <scope>FUNCTION</scope>
    <scope>CATALYTIC ACTIVITY</scope>
    <scope>BIOPHYSICOCHEMICAL PROPERTIES</scope>
    <scope>PATHWAY</scope>
</reference>
<comment type="function">
    <text evidence="4 5 6">Alcohol dehydrogenase involved in the biosynthesis of ajmaline-type monoterpenoid indole alkaloids (MIAs) natural products, important plant-derived pharmaceuticals used in the therapy of heart disorders (PubMed:26715562, PubMed:38212296). Catalyzes the conversion of 1,2-dihydrovomilenine to 17-O-acetylnorajmaline, an intermediate chemical in the biosynthesis of ajmaline (PubMed:12391554, PubMed:26715562, PubMed:38212296). Also able, with a lower efficiency, to convert vomilenine into 19,20-dihydrovomilenine (PubMed:26715562, PubMed:38212296).</text>
</comment>
<comment type="catalytic activity">
    <reaction evidence="4 6">
        <text>17-O-acetylnorajmaline + NADP(+) = (2R)-1,2-dihydrovomilenine + NADPH + 2 H(+)</text>
        <dbReference type="Rhea" id="RHEA:12320"/>
        <dbReference type="ChEBI" id="CHEBI:15378"/>
        <dbReference type="ChEBI" id="CHEBI:17372"/>
        <dbReference type="ChEBI" id="CHEBI:57783"/>
        <dbReference type="ChEBI" id="CHEBI:58349"/>
        <dbReference type="ChEBI" id="CHEBI:77725"/>
        <dbReference type="EC" id="1.3.1.73"/>
    </reaction>
    <physiologicalReaction direction="right-to-left" evidence="4 6">
        <dbReference type="Rhea" id="RHEA:12322"/>
    </physiologicalReaction>
</comment>
<comment type="catalytic activity">
    <reaction evidence="5 6">
        <text>(20S)-19,20-dihydrovomilenine + NADP(+) = vomilenine + NADPH + H(+)</text>
        <dbReference type="Rhea" id="RHEA:79635"/>
        <dbReference type="ChEBI" id="CHEBI:15378"/>
        <dbReference type="ChEBI" id="CHEBI:16408"/>
        <dbReference type="ChEBI" id="CHEBI:57783"/>
        <dbReference type="ChEBI" id="CHEBI:58349"/>
        <dbReference type="ChEBI" id="CHEBI:230482"/>
    </reaction>
    <physiologicalReaction direction="right-to-left" evidence="5 6">
        <dbReference type="Rhea" id="RHEA:79637"/>
    </physiologicalReaction>
</comment>
<comment type="cofactor">
    <cofactor evidence="1">
        <name>Zn(2+)</name>
        <dbReference type="ChEBI" id="CHEBI:29105"/>
    </cofactor>
    <text evidence="1">Binds 2 Zn(2+) ions per subunit.</text>
</comment>
<comment type="biophysicochemical properties">
    <kinetics>
        <KM evidence="5">43.16 uM for vomilenine</KM>
        <KM evidence="6">1089 uM for vomilenine</KM>
        <KM evidence="6">32 uM for 1,2-dihydrovomilenine</KM>
        <text evidence="6">kcat is 0.2 sec(-1) with vomilenine as substrate (PubMed:38212296). kcat is 10.4 sec(-1) with 1,2-dihydrovomilenine as substrate (PubMed:38212296).</text>
    </kinetics>
    <phDependence>
        <text evidence="4">Optimum pH is 6.</text>
    </phDependence>
    <temperatureDependence>
        <text evidence="4">Optimum temperature is 37 degrees Celsius.</text>
    </temperatureDependence>
</comment>
<comment type="pathway">
    <text evidence="4 5 6">Alkaloid biosynthesis; ajmaline biosynthesis.</text>
</comment>
<comment type="subunit">
    <text evidence="1">Homodimer.</text>
</comment>
<comment type="subcellular location">
    <subcellularLocation>
        <location evidence="1">Cytoplasm</location>
    </subcellularLocation>
</comment>
<comment type="alternative products">
    <event type="alternative splicing"/>
    <isoform>
        <id>A0A0U3S9Q3-1</id>
        <name>1</name>
        <sequence type="displayed"/>
    </isoform>
    <isoform>
        <id>A0A0U3S9Q3-2</id>
        <name>2</name>
        <sequence type="described" ref="VSP_062556"/>
    </isoform>
</comment>
<comment type="tissue specificity">
    <text evidence="5 6">Mainly expressed in mature roots and, to a lower extent, in stems and leaves.</text>
</comment>
<comment type="biotechnology">
    <text evidence="6">The strictosidine aglycone-producing AJM7-DeltaHYS yeast strain expressing pathway genes of the VOM module, RsGS, SBE (GsSBE, RsSBE1 or RsSBE2), RsPNAE, RsVS and RsVH, accumulates vomilenine (PubMed:38212296). Additionnal expression of pathway genes of the AJM module, RsVR, RsDHVR, AAE (RsAAE1 or RsAAE2) and RsNNMT, leads to the production of ajmaline (PubMed:38212296). Ajmaline is an anti-arrhythmic alkaloid commercially used as an efficient drug for the treatment of arrhythmic heart disorder (PubMed:38212296).</text>
</comment>
<comment type="similarity">
    <text evidence="8">Belongs to the zinc-containing alcohol dehydrogenase family. Class-P subfamily.</text>
</comment>
<accession>A0A0U3S9Q3</accession>
<proteinExistence type="evidence at protein level"/>
<gene>
    <name evidence="7" type="primary">DHVR</name>
    <name evidence="7" type="synonym">RR4</name>
    <name evidence="7" type="synonym">VR2</name>
</gene>
<evidence type="ECO:0000250" key="1">
    <source>
        <dbReference type="UniProtKB" id="P06525"/>
    </source>
</evidence>
<evidence type="ECO:0000250" key="2">
    <source>
        <dbReference type="UniProtKB" id="W8JWW7"/>
    </source>
</evidence>
<evidence type="ECO:0000255" key="3"/>
<evidence type="ECO:0000269" key="4">
    <source>
    </source>
</evidence>
<evidence type="ECO:0000269" key="5">
    <source>
    </source>
</evidence>
<evidence type="ECO:0000269" key="6">
    <source>
    </source>
</evidence>
<evidence type="ECO:0000303" key="7">
    <source>
    </source>
</evidence>
<evidence type="ECO:0000305" key="8"/>
<evidence type="ECO:0000312" key="9">
    <source>
        <dbReference type="EMBL" id="ALW82981.1"/>
    </source>
</evidence>
<evidence type="ECO:0000312" key="10">
    <source>
        <dbReference type="EMBL" id="WKU61918.1"/>
    </source>
</evidence>
<organism>
    <name type="scientific">Rauvolfia serpentina</name>
    <name type="common">Serpentine wood</name>
    <name type="synonym">Ophioxylon serpentinum</name>
    <dbReference type="NCBI Taxonomy" id="4060"/>
    <lineage>
        <taxon>Eukaryota</taxon>
        <taxon>Viridiplantae</taxon>
        <taxon>Streptophyta</taxon>
        <taxon>Embryophyta</taxon>
        <taxon>Tracheophyta</taxon>
        <taxon>Spermatophyta</taxon>
        <taxon>Magnoliopsida</taxon>
        <taxon>eudicotyledons</taxon>
        <taxon>Gunneridae</taxon>
        <taxon>Pentapetalae</taxon>
        <taxon>asterids</taxon>
        <taxon>lamiids</taxon>
        <taxon>Gentianales</taxon>
        <taxon>Apocynaceae</taxon>
        <taxon>Rauvolfioideae</taxon>
        <taxon>Vinceae</taxon>
        <taxon>Rauvolfiinae</taxon>
        <taxon>Rauvolfia</taxon>
    </lineage>
</organism>
<protein>
    <recommendedName>
        <fullName evidence="7">1,2-Dihydrovomilenine reductase</fullName>
        <shortName evidence="7">RsDHVR</shortName>
        <ecNumber evidence="4 6">1.3.1.73</ecNumber>
    </recommendedName>
    <alternativeName>
        <fullName evidence="7">Protein RR4</fullName>
        <shortName evidence="7">RsRR4</shortName>
    </alternativeName>
    <alternativeName>
        <fullName evidence="7">Vomilenine reductase 2</fullName>
        <shortName evidence="7">RsVR2</shortName>
        <ecNumber evidence="5 6">1.5.1.-</ecNumber>
    </alternativeName>
</protein>
<dbReference type="EC" id="1.3.1.73" evidence="4 6"/>
<dbReference type="EC" id="1.5.1.-" evidence="5 6"/>
<dbReference type="EMBL" id="KT369740">
    <property type="protein sequence ID" value="ALW82981.1"/>
    <property type="molecule type" value="mRNA"/>
</dbReference>
<dbReference type="EMBL" id="OQ591882">
    <property type="protein sequence ID" value="WKU61918.1"/>
    <property type="molecule type" value="mRNA"/>
</dbReference>
<dbReference type="KEGG" id="ag:ALW82981"/>
<dbReference type="BioCyc" id="MetaCyc:MONOMER-20650"/>
<dbReference type="UniPathway" id="UPA00310"/>
<dbReference type="GO" id="GO:0016616">
    <property type="term" value="F:oxidoreductase activity, acting on the CH-OH group of donors, NAD or NADP as acceptor"/>
    <property type="evidence" value="ECO:0007669"/>
    <property type="project" value="InterPro"/>
</dbReference>
<dbReference type="GO" id="GO:0009820">
    <property type="term" value="P:alkaloid metabolic process"/>
    <property type="evidence" value="ECO:0007669"/>
    <property type="project" value="UniProtKB-ARBA"/>
</dbReference>
<dbReference type="CDD" id="cd05283">
    <property type="entry name" value="CAD1"/>
    <property type="match status" value="1"/>
</dbReference>
<dbReference type="FunFam" id="3.40.50.720:FF:000022">
    <property type="entry name" value="Cinnamyl alcohol dehydrogenase"/>
    <property type="match status" value="1"/>
</dbReference>
<dbReference type="FunFam" id="3.90.180.10:FF:000100">
    <property type="entry name" value="Putative cinnamyl alcohol dehydrogenase 6"/>
    <property type="match status" value="1"/>
</dbReference>
<dbReference type="Gene3D" id="3.90.180.10">
    <property type="entry name" value="Medium-chain alcohol dehydrogenases, catalytic domain"/>
    <property type="match status" value="1"/>
</dbReference>
<dbReference type="Gene3D" id="3.40.50.720">
    <property type="entry name" value="NAD(P)-binding Rossmann-like Domain"/>
    <property type="match status" value="1"/>
</dbReference>
<dbReference type="InterPro" id="IPR013149">
    <property type="entry name" value="ADH-like_C"/>
</dbReference>
<dbReference type="InterPro" id="IPR013154">
    <property type="entry name" value="ADH-like_N"/>
</dbReference>
<dbReference type="InterPro" id="IPR047109">
    <property type="entry name" value="CAD-like"/>
</dbReference>
<dbReference type="InterPro" id="IPR011032">
    <property type="entry name" value="GroES-like_sf"/>
</dbReference>
<dbReference type="InterPro" id="IPR036291">
    <property type="entry name" value="NAD(P)-bd_dom_sf"/>
</dbReference>
<dbReference type="InterPro" id="IPR020843">
    <property type="entry name" value="PKS_ER"/>
</dbReference>
<dbReference type="PANTHER" id="PTHR42683">
    <property type="entry name" value="ALDEHYDE REDUCTASE"/>
    <property type="match status" value="1"/>
</dbReference>
<dbReference type="Pfam" id="PF08240">
    <property type="entry name" value="ADH_N"/>
    <property type="match status" value="1"/>
</dbReference>
<dbReference type="Pfam" id="PF00107">
    <property type="entry name" value="ADH_zinc_N"/>
    <property type="match status" value="1"/>
</dbReference>
<dbReference type="SMART" id="SM00829">
    <property type="entry name" value="PKS_ER"/>
    <property type="match status" value="1"/>
</dbReference>
<dbReference type="SUPFAM" id="SSF50129">
    <property type="entry name" value="GroES-like"/>
    <property type="match status" value="1"/>
</dbReference>
<dbReference type="SUPFAM" id="SSF51735">
    <property type="entry name" value="NAD(P)-binding Rossmann-fold domains"/>
    <property type="match status" value="1"/>
</dbReference>
<name>DHVOR_RAUSE</name>
<feature type="chain" id="PRO_0000462316" description="1,2-Dihydrovomilenine reductase">
    <location>
        <begin position="1"/>
        <end position="363"/>
    </location>
</feature>
<feature type="domain" description="Enoyl reductase (ER)" evidence="3">
    <location>
        <begin position="24"/>
        <end position="352"/>
    </location>
</feature>
<feature type="binding site" evidence="1">
    <location>
        <position position="51"/>
    </location>
    <ligand>
        <name>Zn(2+)</name>
        <dbReference type="ChEBI" id="CHEBI:29105"/>
        <label>1</label>
        <note>catalytic</note>
    </ligand>
</feature>
<feature type="binding site" evidence="1">
    <location>
        <position position="53"/>
    </location>
    <ligand>
        <name>NADP(+)</name>
        <dbReference type="ChEBI" id="CHEBI:58349"/>
    </ligand>
</feature>
<feature type="binding site" evidence="1">
    <location>
        <position position="54"/>
    </location>
    <ligand>
        <name>Zn(2+)</name>
        <dbReference type="ChEBI" id="CHEBI:29105"/>
        <label>1</label>
        <note>catalytic</note>
    </ligand>
</feature>
<feature type="binding site" evidence="1">
    <location>
        <position position="74"/>
    </location>
    <ligand>
        <name>Zn(2+)</name>
        <dbReference type="ChEBI" id="CHEBI:29105"/>
        <label>1</label>
        <note>catalytic</note>
    </ligand>
</feature>
<feature type="binding site" evidence="1">
    <location>
        <position position="104"/>
    </location>
    <ligand>
        <name>Zn(2+)</name>
        <dbReference type="ChEBI" id="CHEBI:29105"/>
        <label>2</label>
    </ligand>
</feature>
<feature type="binding site" evidence="1">
    <location>
        <position position="107"/>
    </location>
    <ligand>
        <name>Zn(2+)</name>
        <dbReference type="ChEBI" id="CHEBI:29105"/>
        <label>2</label>
    </ligand>
</feature>
<feature type="binding site" evidence="1">
    <location>
        <position position="110"/>
    </location>
    <ligand>
        <name>Zn(2+)</name>
        <dbReference type="ChEBI" id="CHEBI:29105"/>
        <label>2</label>
    </ligand>
</feature>
<feature type="binding site" evidence="1">
    <location>
        <position position="118"/>
    </location>
    <ligand>
        <name>Zn(2+)</name>
        <dbReference type="ChEBI" id="CHEBI:29105"/>
        <label>2</label>
    </ligand>
</feature>
<feature type="binding site" evidence="2">
    <location>
        <position position="193"/>
    </location>
    <ligand>
        <name>NADP(+)</name>
        <dbReference type="ChEBI" id="CHEBI:58349"/>
    </ligand>
</feature>
<feature type="binding site" evidence="2">
    <location>
        <position position="195"/>
    </location>
    <ligand>
        <name>NADP(+)</name>
        <dbReference type="ChEBI" id="CHEBI:58349"/>
    </ligand>
</feature>
<feature type="binding site" evidence="2">
    <location>
        <position position="196"/>
    </location>
    <ligand>
        <name>NADP(+)</name>
        <dbReference type="ChEBI" id="CHEBI:58349"/>
    </ligand>
</feature>
<feature type="binding site" evidence="2">
    <location>
        <position position="215"/>
    </location>
    <ligand>
        <name>NADP(+)</name>
        <dbReference type="ChEBI" id="CHEBI:58349"/>
    </ligand>
</feature>
<feature type="binding site" evidence="2">
    <location>
        <position position="216"/>
    </location>
    <ligand>
        <name>NADP(+)</name>
        <dbReference type="ChEBI" id="CHEBI:58349"/>
    </ligand>
</feature>
<feature type="binding site" evidence="2">
    <location>
        <position position="217"/>
    </location>
    <ligand>
        <name>NADP(+)</name>
        <dbReference type="ChEBI" id="CHEBI:58349"/>
    </ligand>
</feature>
<feature type="binding site" evidence="2">
    <location>
        <position position="220"/>
    </location>
    <ligand>
        <name>NADP(+)</name>
        <dbReference type="ChEBI" id="CHEBI:58349"/>
    </ligand>
</feature>
<feature type="binding site" evidence="1">
    <location>
        <position position="221"/>
    </location>
    <ligand>
        <name>NADP(+)</name>
        <dbReference type="ChEBI" id="CHEBI:58349"/>
    </ligand>
</feature>
<feature type="binding site" evidence="1">
    <location>
        <position position="278"/>
    </location>
    <ligand>
        <name>NADP(+)</name>
        <dbReference type="ChEBI" id="CHEBI:58349"/>
    </ligand>
</feature>
<feature type="binding site" evidence="1">
    <location>
        <position position="280"/>
    </location>
    <ligand>
        <name>NADP(+)</name>
        <dbReference type="ChEBI" id="CHEBI:58349"/>
    </ligand>
</feature>
<feature type="binding site" evidence="1">
    <location>
        <position position="302"/>
    </location>
    <ligand>
        <name>NADP(+)</name>
        <dbReference type="ChEBI" id="CHEBI:58349"/>
    </ligand>
</feature>
<feature type="binding site" evidence="1">
    <location>
        <position position="349"/>
    </location>
    <ligand>
        <name>NADP(+)</name>
        <dbReference type="ChEBI" id="CHEBI:58349"/>
    </ligand>
</feature>
<feature type="splice variant" id="VSP_062556" description="In isoform 2.">
    <original>M</original>
    <variation>MRFANFEGSNYYCIDTTPYSSSALCMCMIISFSNHYFVISFPSFSRFVFEM</variation>
    <location>
        <position position="1"/>
    </location>
</feature>
<feature type="sequence conflict" description="In Ref. 2; WKU61918." evidence="8" ref="2">
    <original>T</original>
    <variation>R</variation>
    <location>
        <position position="20"/>
    </location>
</feature>
<feature type="sequence conflict" description="In Ref. 2; WKU61918." evidence="8" ref="2">
    <original>T</original>
    <variation>I</variation>
    <location>
        <position position="78"/>
    </location>
</feature>
<feature type="sequence conflict" description="In Ref. 2; WKU61918." evidence="8" ref="2">
    <original>VK</original>
    <variation>AR</variation>
    <location>
        <begin position="89"/>
        <end position="90"/>
    </location>
</feature>
<feature type="sequence conflict" description="In Ref. 2; WKU61918." evidence="8" ref="2">
    <original>D</original>
    <variation>H</variation>
    <location>
        <position position="108"/>
    </location>
</feature>
<feature type="sequence conflict" description="In Ref. 2; WKU61918." evidence="8" ref="2">
    <original>R</original>
    <variation>H</variation>
    <location>
        <position position="114"/>
    </location>
</feature>
<feature type="sequence conflict" description="In Ref. 2; WKU61918." evidence="8" ref="2">
    <original>ID</original>
    <variation>MY</variation>
    <location>
        <begin position="128"/>
        <end position="129"/>
    </location>
</feature>
<feature type="sequence conflict" description="In Ref. 2; WKU61918." evidence="8" ref="2">
    <original>SETVAN</original>
    <variation>NETVVS</variation>
    <location>
        <begin position="141"/>
        <end position="146"/>
    </location>
</feature>
<feature type="sequence conflict" description="In Ref. 2; WKU61918." evidence="8" ref="2">
    <original>C</original>
    <variation>R</variation>
    <location>
        <position position="152"/>
    </location>
</feature>
<feature type="sequence conflict" description="In Ref. 2; WKU61918." evidence="8" ref="2">
    <original>N</original>
    <variation>S</variation>
    <location>
        <position position="167"/>
    </location>
</feature>
<feature type="sequence conflict" description="In Ref. 2; WKU61918." evidence="8" ref="2">
    <original>G</original>
    <variation>D</variation>
    <location>
        <position position="222"/>
    </location>
</feature>
<feature type="sequence conflict" description="In Ref. 2; WKU61918." evidence="8" ref="2">
    <original>A</original>
    <variation>D</variation>
    <location>
        <position position="239"/>
    </location>
</feature>
<feature type="sequence conflict" description="In Ref. 2; WKU61918." evidence="8" ref="2">
    <original>E</original>
    <variation>G</variation>
    <location>
        <position position="263"/>
    </location>
</feature>
<feature type="sequence conflict" description="In Ref. 2; WKU61918." evidence="8" ref="2">
    <original>S</original>
    <variation>N</variation>
    <location>
        <position position="325"/>
    </location>
</feature>
<feature type="sequence conflict" description="In Ref. 2; WKU61918." evidence="8" ref="2">
    <original>V</original>
    <variation>I</variation>
    <location>
        <position position="334"/>
    </location>
</feature>
<feature type="sequence conflict" description="In Ref. 2; WKU61918." evidence="8" ref="2">
    <original>G</original>
    <variation>R</variation>
    <location>
        <position position="344"/>
    </location>
</feature>
<keyword id="KW-0017">Alkaloid metabolism</keyword>
<keyword id="KW-0025">Alternative splicing</keyword>
<keyword id="KW-0963">Cytoplasm</keyword>
<keyword id="KW-0903">Direct protein sequencing</keyword>
<keyword id="KW-0479">Metal-binding</keyword>
<keyword id="KW-0521">NADP</keyword>
<keyword id="KW-0560">Oxidoreductase</keyword>
<keyword id="KW-0862">Zinc</keyword>